<feature type="chain" id="PRO_0000376308" description="NADH-quinone oxidoreductase subunit B">
    <location>
        <begin position="1"/>
        <end position="225"/>
    </location>
</feature>
<feature type="binding site" evidence="1">
    <location>
        <position position="68"/>
    </location>
    <ligand>
        <name>[4Fe-4S] cluster</name>
        <dbReference type="ChEBI" id="CHEBI:49883"/>
    </ligand>
</feature>
<feature type="binding site" evidence="1">
    <location>
        <position position="69"/>
    </location>
    <ligand>
        <name>[4Fe-4S] cluster</name>
        <dbReference type="ChEBI" id="CHEBI:49883"/>
    </ligand>
</feature>
<feature type="binding site" evidence="1">
    <location>
        <position position="134"/>
    </location>
    <ligand>
        <name>[4Fe-4S] cluster</name>
        <dbReference type="ChEBI" id="CHEBI:49883"/>
    </ligand>
</feature>
<feature type="binding site" evidence="1">
    <location>
        <position position="163"/>
    </location>
    <ligand>
        <name>[4Fe-4S] cluster</name>
        <dbReference type="ChEBI" id="CHEBI:49883"/>
    </ligand>
</feature>
<keyword id="KW-0004">4Fe-4S</keyword>
<keyword id="KW-0997">Cell inner membrane</keyword>
<keyword id="KW-1003">Cell membrane</keyword>
<keyword id="KW-0408">Iron</keyword>
<keyword id="KW-0411">Iron-sulfur</keyword>
<keyword id="KW-0472">Membrane</keyword>
<keyword id="KW-0479">Metal-binding</keyword>
<keyword id="KW-0520">NAD</keyword>
<keyword id="KW-0874">Quinone</keyword>
<keyword id="KW-1278">Translocase</keyword>
<keyword id="KW-0813">Transport</keyword>
<keyword id="KW-0830">Ubiquinone</keyword>
<name>NUOB_PSEA8</name>
<organism>
    <name type="scientific">Pseudomonas aeruginosa (strain LESB58)</name>
    <dbReference type="NCBI Taxonomy" id="557722"/>
    <lineage>
        <taxon>Bacteria</taxon>
        <taxon>Pseudomonadati</taxon>
        <taxon>Pseudomonadota</taxon>
        <taxon>Gammaproteobacteria</taxon>
        <taxon>Pseudomonadales</taxon>
        <taxon>Pseudomonadaceae</taxon>
        <taxon>Pseudomonas</taxon>
    </lineage>
</organism>
<sequence length="225" mass="25425">MQYKLTRIDPDAANDQYPIGERETVADPLVEGQVHKNIFMGKLEDVLNSTVNWGRKNSLWPYNFGLSCCYVEMTTAFTAPHDIARFGAEVIRASPRQADFMVIAGTCFIKMAPVIQRLYEQMLEPKWVISMGSCANSGGMYDIYSVVQGVDKFLPVDVYIPGCPPRPEAFLQGLMLLQESIGQERRPLSWVVGDQGVYRAEMPAQKDLKREQRIQVTNLRSPDEV</sequence>
<accession>B7VAR4</accession>
<dbReference type="EC" id="7.1.1.-" evidence="1"/>
<dbReference type="EMBL" id="FM209186">
    <property type="protein sequence ID" value="CAW27193.1"/>
    <property type="molecule type" value="Genomic_DNA"/>
</dbReference>
<dbReference type="RefSeq" id="WP_003090455.1">
    <property type="nucleotide sequence ID" value="NC_011770.1"/>
</dbReference>
<dbReference type="SMR" id="B7VAR4"/>
<dbReference type="KEGG" id="pag:PLES_24671"/>
<dbReference type="HOGENOM" id="CLU_055737_7_3_6"/>
<dbReference type="GO" id="GO:0005886">
    <property type="term" value="C:plasma membrane"/>
    <property type="evidence" value="ECO:0007669"/>
    <property type="project" value="UniProtKB-SubCell"/>
</dbReference>
<dbReference type="GO" id="GO:0045271">
    <property type="term" value="C:respiratory chain complex I"/>
    <property type="evidence" value="ECO:0007669"/>
    <property type="project" value="TreeGrafter"/>
</dbReference>
<dbReference type="GO" id="GO:0051539">
    <property type="term" value="F:4 iron, 4 sulfur cluster binding"/>
    <property type="evidence" value="ECO:0007669"/>
    <property type="project" value="UniProtKB-KW"/>
</dbReference>
<dbReference type="GO" id="GO:0005506">
    <property type="term" value="F:iron ion binding"/>
    <property type="evidence" value="ECO:0007669"/>
    <property type="project" value="UniProtKB-UniRule"/>
</dbReference>
<dbReference type="GO" id="GO:0008137">
    <property type="term" value="F:NADH dehydrogenase (ubiquinone) activity"/>
    <property type="evidence" value="ECO:0007669"/>
    <property type="project" value="InterPro"/>
</dbReference>
<dbReference type="GO" id="GO:0050136">
    <property type="term" value="F:NADH:ubiquinone reductase (non-electrogenic) activity"/>
    <property type="evidence" value="ECO:0007669"/>
    <property type="project" value="UniProtKB-UniRule"/>
</dbReference>
<dbReference type="GO" id="GO:0048038">
    <property type="term" value="F:quinone binding"/>
    <property type="evidence" value="ECO:0007669"/>
    <property type="project" value="UniProtKB-KW"/>
</dbReference>
<dbReference type="GO" id="GO:0009060">
    <property type="term" value="P:aerobic respiration"/>
    <property type="evidence" value="ECO:0007669"/>
    <property type="project" value="TreeGrafter"/>
</dbReference>
<dbReference type="GO" id="GO:0015990">
    <property type="term" value="P:electron transport coupled proton transport"/>
    <property type="evidence" value="ECO:0007669"/>
    <property type="project" value="TreeGrafter"/>
</dbReference>
<dbReference type="FunFam" id="3.40.50.12280:FF:000002">
    <property type="entry name" value="NADH-quinone oxidoreductase subunit B"/>
    <property type="match status" value="1"/>
</dbReference>
<dbReference type="Gene3D" id="3.40.50.12280">
    <property type="match status" value="1"/>
</dbReference>
<dbReference type="HAMAP" id="MF_01356">
    <property type="entry name" value="NDH1_NuoB"/>
    <property type="match status" value="1"/>
</dbReference>
<dbReference type="InterPro" id="IPR006137">
    <property type="entry name" value="NADH_UbQ_OxRdtase-like_20kDa"/>
</dbReference>
<dbReference type="InterPro" id="IPR006138">
    <property type="entry name" value="NADH_UQ_OxRdtase_20Kd_su"/>
</dbReference>
<dbReference type="NCBIfam" id="TIGR01957">
    <property type="entry name" value="nuoB_fam"/>
    <property type="match status" value="1"/>
</dbReference>
<dbReference type="NCBIfam" id="NF005012">
    <property type="entry name" value="PRK06411.1"/>
    <property type="match status" value="1"/>
</dbReference>
<dbReference type="PANTHER" id="PTHR11995">
    <property type="entry name" value="NADH DEHYDROGENASE"/>
    <property type="match status" value="1"/>
</dbReference>
<dbReference type="PANTHER" id="PTHR11995:SF14">
    <property type="entry name" value="NADH DEHYDROGENASE [UBIQUINONE] IRON-SULFUR PROTEIN 7, MITOCHONDRIAL"/>
    <property type="match status" value="1"/>
</dbReference>
<dbReference type="Pfam" id="PF01058">
    <property type="entry name" value="Oxidored_q6"/>
    <property type="match status" value="1"/>
</dbReference>
<dbReference type="SUPFAM" id="SSF56770">
    <property type="entry name" value="HydA/Nqo6-like"/>
    <property type="match status" value="1"/>
</dbReference>
<dbReference type="PROSITE" id="PS01150">
    <property type="entry name" value="COMPLEX1_20K"/>
    <property type="match status" value="1"/>
</dbReference>
<comment type="function">
    <text evidence="1">NDH-1 shuttles electrons from NADH, via FMN and iron-sulfur (Fe-S) centers, to quinones in the respiratory chain. The immediate electron acceptor for the enzyme in this species is believed to be ubiquinone. Couples the redox reaction to proton translocation (for every two electrons transferred, four hydrogen ions are translocated across the cytoplasmic membrane), and thus conserves the redox energy in a proton gradient.</text>
</comment>
<comment type="catalytic activity">
    <reaction evidence="1">
        <text>a quinone + NADH + 5 H(+)(in) = a quinol + NAD(+) + 4 H(+)(out)</text>
        <dbReference type="Rhea" id="RHEA:57888"/>
        <dbReference type="ChEBI" id="CHEBI:15378"/>
        <dbReference type="ChEBI" id="CHEBI:24646"/>
        <dbReference type="ChEBI" id="CHEBI:57540"/>
        <dbReference type="ChEBI" id="CHEBI:57945"/>
        <dbReference type="ChEBI" id="CHEBI:132124"/>
    </reaction>
</comment>
<comment type="cofactor">
    <cofactor evidence="1">
        <name>[4Fe-4S] cluster</name>
        <dbReference type="ChEBI" id="CHEBI:49883"/>
    </cofactor>
    <text evidence="1">Binds 1 [4Fe-4S] cluster.</text>
</comment>
<comment type="subunit">
    <text evidence="1">NDH-1 is composed of 13 different subunits. Subunits NuoB, CD, E, F, and G constitute the peripheral sector of the complex.</text>
</comment>
<comment type="subcellular location">
    <subcellularLocation>
        <location evidence="1">Cell inner membrane</location>
        <topology evidence="1">Peripheral membrane protein</topology>
        <orientation evidence="1">Cytoplasmic side</orientation>
    </subcellularLocation>
</comment>
<comment type="similarity">
    <text evidence="1">Belongs to the complex I 20 kDa subunit family.</text>
</comment>
<protein>
    <recommendedName>
        <fullName evidence="1">NADH-quinone oxidoreductase subunit B</fullName>
        <ecNumber evidence="1">7.1.1.-</ecNumber>
    </recommendedName>
    <alternativeName>
        <fullName evidence="1">NADH dehydrogenase I subunit B</fullName>
    </alternativeName>
    <alternativeName>
        <fullName evidence="1">NDH-1 subunit B</fullName>
    </alternativeName>
</protein>
<reference key="1">
    <citation type="journal article" date="2009" name="Genome Res.">
        <title>Newly introduced genomic prophage islands are critical determinants of in vivo competitiveness in the Liverpool epidemic strain of Pseudomonas aeruginosa.</title>
        <authorList>
            <person name="Winstanley C."/>
            <person name="Langille M.G.I."/>
            <person name="Fothergill J.L."/>
            <person name="Kukavica-Ibrulj I."/>
            <person name="Paradis-Bleau C."/>
            <person name="Sanschagrin F."/>
            <person name="Thomson N.R."/>
            <person name="Winsor G.L."/>
            <person name="Quail M.A."/>
            <person name="Lennard N."/>
            <person name="Bignell A."/>
            <person name="Clarke L."/>
            <person name="Seeger K."/>
            <person name="Saunders D."/>
            <person name="Harris D."/>
            <person name="Parkhill J."/>
            <person name="Hancock R.E.W."/>
            <person name="Brinkman F.S.L."/>
            <person name="Levesque R.C."/>
        </authorList>
    </citation>
    <scope>NUCLEOTIDE SEQUENCE [LARGE SCALE GENOMIC DNA]</scope>
    <source>
        <strain>LESB58</strain>
    </source>
</reference>
<proteinExistence type="inferred from homology"/>
<gene>
    <name evidence="1" type="primary">nuoB</name>
    <name type="ordered locus">PLES_24671</name>
</gene>
<evidence type="ECO:0000255" key="1">
    <source>
        <dbReference type="HAMAP-Rule" id="MF_01356"/>
    </source>
</evidence>